<proteinExistence type="inferred from homology"/>
<gene>
    <name type="primary">alaS</name>
    <name type="ordered locus">BB_0220</name>
</gene>
<feature type="chain" id="PRO_0000075072" description="Alanine--tRNA ligase">
    <location>
        <begin position="1"/>
        <end position="594"/>
    </location>
</feature>
<feature type="binding site" evidence="2">
    <location>
        <position position="456"/>
    </location>
    <ligand>
        <name>Zn(2+)</name>
        <dbReference type="ChEBI" id="CHEBI:29105"/>
    </ligand>
</feature>
<feature type="binding site" evidence="2">
    <location>
        <position position="460"/>
    </location>
    <ligand>
        <name>Zn(2+)</name>
        <dbReference type="ChEBI" id="CHEBI:29105"/>
    </ligand>
</feature>
<feature type="binding site" evidence="2">
    <location>
        <position position="558"/>
    </location>
    <ligand>
        <name>Zn(2+)</name>
        <dbReference type="ChEBI" id="CHEBI:29105"/>
    </ligand>
</feature>
<feature type="binding site" evidence="2">
    <location>
        <position position="562"/>
    </location>
    <ligand>
        <name>Zn(2+)</name>
        <dbReference type="ChEBI" id="CHEBI:29105"/>
    </ligand>
</feature>
<evidence type="ECO:0000250" key="1"/>
<evidence type="ECO:0000255" key="2"/>
<evidence type="ECO:0000305" key="3"/>
<name>SYA_BORBU</name>
<comment type="function">
    <text evidence="1">Catalyzes the attachment of alanine to tRNA(Ala) in a two-step reaction: alanine is first activated by ATP to form Ala-AMP and then transferred to the acceptor end of tRNA(Ala). Also edits incorrectly charged Ser-tRNA(Ala) and Gly-tRNA(Ala) via its editing domain (By similarity).</text>
</comment>
<comment type="catalytic activity">
    <reaction>
        <text>tRNA(Ala) + L-alanine + ATP = L-alanyl-tRNA(Ala) + AMP + diphosphate</text>
        <dbReference type="Rhea" id="RHEA:12540"/>
        <dbReference type="Rhea" id="RHEA-COMP:9657"/>
        <dbReference type="Rhea" id="RHEA-COMP:9923"/>
        <dbReference type="ChEBI" id="CHEBI:30616"/>
        <dbReference type="ChEBI" id="CHEBI:33019"/>
        <dbReference type="ChEBI" id="CHEBI:57972"/>
        <dbReference type="ChEBI" id="CHEBI:78442"/>
        <dbReference type="ChEBI" id="CHEBI:78497"/>
        <dbReference type="ChEBI" id="CHEBI:456215"/>
        <dbReference type="EC" id="6.1.1.7"/>
    </reaction>
</comment>
<comment type="cofactor">
    <cofactor evidence="1">
        <name>Zn(2+)</name>
        <dbReference type="ChEBI" id="CHEBI:29105"/>
    </cofactor>
    <text evidence="1">Binds 1 zinc ion per subunit.</text>
</comment>
<comment type="subcellular location">
    <subcellularLocation>
        <location evidence="1">Cytoplasm</location>
    </subcellularLocation>
</comment>
<comment type="domain">
    <text evidence="1">Consists of two domains; the N-terminal catalytic domain (in this organism this is shorter than usual) and the editing domain; the C-terminal C-Ala domain found in most orthologs is missing. The editing domain removes incorrectly charged amino acids (By similarity).</text>
</comment>
<comment type="similarity">
    <text evidence="3">Belongs to the class-II aminoacyl-tRNA synthetase family.</text>
</comment>
<keyword id="KW-0030">Aminoacyl-tRNA synthetase</keyword>
<keyword id="KW-0067">ATP-binding</keyword>
<keyword id="KW-0963">Cytoplasm</keyword>
<keyword id="KW-0436">Ligase</keyword>
<keyword id="KW-0479">Metal-binding</keyword>
<keyword id="KW-0547">Nucleotide-binding</keyword>
<keyword id="KW-0648">Protein biosynthesis</keyword>
<keyword id="KW-1185">Reference proteome</keyword>
<keyword id="KW-0694">RNA-binding</keyword>
<keyword id="KW-0820">tRNA-binding</keyword>
<keyword id="KW-0862">Zinc</keyword>
<sequence>MTLNKLRKKYIDFFKSKKHFEIMGKSLVPENDPTVLFNTAGMQPLIPYLLGEVHPSGDMLVNVQKCLRTGDIDEVGDLSHLTFFEMLGNWSLGAYFKEYSVKCSFEFLTSSDYLNIPKDSLYVSVFEGDQEIPRDTETAKVWESLGISKDRIHYLSKDHNFWGPVGSKGPCGPDTEIYVDTGKSKCSLDCNITCSCGKYFEIWNNVFMQYNKDENGNYIELGRKCVDTGMGLERTIAFLQGKSSVYDTDAFMPIIKRIEYISGKIYGQKEDDDRCIRIISDHVKAACFILADSSVVFPSNLGQGYVLRRLIRRSIRYAKKLGIKSHFLADLVDSVEAIYRSFYNELTEKKDFIKKELSKEEEKFFKTLSQGEQEFIKITRNLPSKTIPGDIAFKLYDTYGFPYEVTEELAIEYGFNVDKLGFNEHFKKHQKTSKKGGDKVFKGGLADYTYETTKLHTATHLLHKALQLVLGDHVRQKGSNITAERLRFDFVHSEKMTDDEIKKVEEIVNLQIKNSLSVKKIIMELSEAREKGAMALFGEKYDDLVSVYEIDGFSLEVCGGPHVENTNELGTFKIQKEQSSSSGIRRIKAILIDE</sequence>
<protein>
    <recommendedName>
        <fullName>Alanine--tRNA ligase</fullName>
        <ecNumber>6.1.1.7</ecNumber>
    </recommendedName>
    <alternativeName>
        <fullName>Alanyl-tRNA synthetase</fullName>
        <shortName>AlaRS</shortName>
    </alternativeName>
</protein>
<accession>O51238</accession>
<dbReference type="EC" id="6.1.1.7"/>
<dbReference type="EMBL" id="AE000783">
    <property type="protein sequence ID" value="AAC66604.1"/>
    <property type="molecule type" value="Genomic_DNA"/>
</dbReference>
<dbReference type="PIR" id="D70127">
    <property type="entry name" value="D70127"/>
</dbReference>
<dbReference type="RefSeq" id="NP_212354.1">
    <property type="nucleotide sequence ID" value="NC_001318.1"/>
</dbReference>
<dbReference type="RefSeq" id="WP_010889708.1">
    <property type="nucleotide sequence ID" value="NC_001318.1"/>
</dbReference>
<dbReference type="SMR" id="O51238"/>
<dbReference type="STRING" id="224326.BB_0220"/>
<dbReference type="PaxDb" id="224326-BB_0220"/>
<dbReference type="EnsemblBacteria" id="AAC66604">
    <property type="protein sequence ID" value="AAC66604"/>
    <property type="gene ID" value="BB_0220"/>
</dbReference>
<dbReference type="KEGG" id="bbu:BB_0220"/>
<dbReference type="PATRIC" id="fig|224326.49.peg.618"/>
<dbReference type="HOGENOM" id="CLU_004485_0_2_12"/>
<dbReference type="OrthoDB" id="9803884at2"/>
<dbReference type="Proteomes" id="UP000001807">
    <property type="component" value="Chromosome"/>
</dbReference>
<dbReference type="GO" id="GO:0005829">
    <property type="term" value="C:cytosol"/>
    <property type="evidence" value="ECO:0007669"/>
    <property type="project" value="TreeGrafter"/>
</dbReference>
<dbReference type="GO" id="GO:0004813">
    <property type="term" value="F:alanine-tRNA ligase activity"/>
    <property type="evidence" value="ECO:0007669"/>
    <property type="project" value="UniProtKB-UniRule"/>
</dbReference>
<dbReference type="GO" id="GO:0002161">
    <property type="term" value="F:aminoacyl-tRNA deacylase activity"/>
    <property type="evidence" value="ECO:0007669"/>
    <property type="project" value="TreeGrafter"/>
</dbReference>
<dbReference type="GO" id="GO:0005524">
    <property type="term" value="F:ATP binding"/>
    <property type="evidence" value="ECO:0007669"/>
    <property type="project" value="UniProtKB-UniRule"/>
</dbReference>
<dbReference type="GO" id="GO:0000049">
    <property type="term" value="F:tRNA binding"/>
    <property type="evidence" value="ECO:0007669"/>
    <property type="project" value="UniProtKB-KW"/>
</dbReference>
<dbReference type="GO" id="GO:0008270">
    <property type="term" value="F:zinc ion binding"/>
    <property type="evidence" value="ECO:0007669"/>
    <property type="project" value="UniProtKB-UniRule"/>
</dbReference>
<dbReference type="GO" id="GO:0006419">
    <property type="term" value="P:alanyl-tRNA aminoacylation"/>
    <property type="evidence" value="ECO:0007669"/>
    <property type="project" value="UniProtKB-UniRule"/>
</dbReference>
<dbReference type="CDD" id="cd00673">
    <property type="entry name" value="AlaRS_core"/>
    <property type="match status" value="1"/>
</dbReference>
<dbReference type="FunFam" id="3.30.980.10:FF:000004">
    <property type="entry name" value="Alanine--tRNA ligase, cytoplasmic"/>
    <property type="match status" value="1"/>
</dbReference>
<dbReference type="Gene3D" id="3.30.54.20">
    <property type="match status" value="1"/>
</dbReference>
<dbReference type="Gene3D" id="3.30.930.10">
    <property type="entry name" value="Bira Bifunctional Protein, Domain 2"/>
    <property type="match status" value="1"/>
</dbReference>
<dbReference type="Gene3D" id="3.30.980.10">
    <property type="entry name" value="Threonyl-trna Synthetase, Chain A, domain 2"/>
    <property type="match status" value="1"/>
</dbReference>
<dbReference type="HAMAP" id="MF_00036_B">
    <property type="entry name" value="Ala_tRNA_synth_B"/>
    <property type="match status" value="1"/>
</dbReference>
<dbReference type="InterPro" id="IPR045864">
    <property type="entry name" value="aa-tRNA-synth_II/BPL/LPL"/>
</dbReference>
<dbReference type="InterPro" id="IPR002318">
    <property type="entry name" value="Ala-tRNA-lgiase_IIc"/>
</dbReference>
<dbReference type="InterPro" id="IPR018162">
    <property type="entry name" value="Ala-tRNA-ligase_IIc_anticod-bd"/>
</dbReference>
<dbReference type="InterPro" id="IPR018165">
    <property type="entry name" value="Ala-tRNA-synth_IIc_core"/>
</dbReference>
<dbReference type="InterPro" id="IPR018164">
    <property type="entry name" value="Ala-tRNA-synth_IIc_N"/>
</dbReference>
<dbReference type="InterPro" id="IPR050058">
    <property type="entry name" value="Ala-tRNA_ligase"/>
</dbReference>
<dbReference type="InterPro" id="IPR023033">
    <property type="entry name" value="Ala_tRNA_ligase_euk/bac"/>
</dbReference>
<dbReference type="InterPro" id="IPR018163">
    <property type="entry name" value="Thr/Ala-tRNA-synth_IIc_edit"/>
</dbReference>
<dbReference type="InterPro" id="IPR012947">
    <property type="entry name" value="tRNA_SAD"/>
</dbReference>
<dbReference type="NCBIfam" id="NF002436">
    <property type="entry name" value="PRK01584.1"/>
    <property type="match status" value="1"/>
</dbReference>
<dbReference type="PANTHER" id="PTHR11777:SF9">
    <property type="entry name" value="ALANINE--TRNA LIGASE, CYTOPLASMIC"/>
    <property type="match status" value="1"/>
</dbReference>
<dbReference type="PANTHER" id="PTHR11777">
    <property type="entry name" value="ALANYL-TRNA SYNTHETASE"/>
    <property type="match status" value="1"/>
</dbReference>
<dbReference type="Pfam" id="PF01411">
    <property type="entry name" value="tRNA-synt_2c"/>
    <property type="match status" value="1"/>
</dbReference>
<dbReference type="Pfam" id="PF07973">
    <property type="entry name" value="tRNA_SAD"/>
    <property type="match status" value="1"/>
</dbReference>
<dbReference type="PRINTS" id="PR00980">
    <property type="entry name" value="TRNASYNTHALA"/>
</dbReference>
<dbReference type="SMART" id="SM00863">
    <property type="entry name" value="tRNA_SAD"/>
    <property type="match status" value="1"/>
</dbReference>
<dbReference type="SUPFAM" id="SSF55681">
    <property type="entry name" value="Class II aaRS and biotin synthetases"/>
    <property type="match status" value="1"/>
</dbReference>
<dbReference type="SUPFAM" id="SSF101353">
    <property type="entry name" value="Putative anticodon-binding domain of alanyl-tRNA synthetase (AlaRS)"/>
    <property type="match status" value="1"/>
</dbReference>
<dbReference type="SUPFAM" id="SSF55186">
    <property type="entry name" value="ThrRS/AlaRS common domain"/>
    <property type="match status" value="1"/>
</dbReference>
<dbReference type="PROSITE" id="PS50860">
    <property type="entry name" value="AA_TRNA_LIGASE_II_ALA"/>
    <property type="match status" value="1"/>
</dbReference>
<organism>
    <name type="scientific">Borreliella burgdorferi (strain ATCC 35210 / DSM 4680 / CIP 102532 / B31)</name>
    <name type="common">Borrelia burgdorferi</name>
    <dbReference type="NCBI Taxonomy" id="224326"/>
    <lineage>
        <taxon>Bacteria</taxon>
        <taxon>Pseudomonadati</taxon>
        <taxon>Spirochaetota</taxon>
        <taxon>Spirochaetia</taxon>
        <taxon>Spirochaetales</taxon>
        <taxon>Borreliaceae</taxon>
        <taxon>Borreliella</taxon>
    </lineage>
</organism>
<reference key="1">
    <citation type="journal article" date="1997" name="Nature">
        <title>Genomic sequence of a Lyme disease spirochaete, Borrelia burgdorferi.</title>
        <authorList>
            <person name="Fraser C.M."/>
            <person name="Casjens S."/>
            <person name="Huang W.M."/>
            <person name="Sutton G.G."/>
            <person name="Clayton R.A."/>
            <person name="Lathigra R."/>
            <person name="White O."/>
            <person name="Ketchum K.A."/>
            <person name="Dodson R.J."/>
            <person name="Hickey E.K."/>
            <person name="Gwinn M.L."/>
            <person name="Dougherty B.A."/>
            <person name="Tomb J.-F."/>
            <person name="Fleischmann R.D."/>
            <person name="Richardson D.L."/>
            <person name="Peterson J.D."/>
            <person name="Kerlavage A.R."/>
            <person name="Quackenbush J."/>
            <person name="Salzberg S.L."/>
            <person name="Hanson M."/>
            <person name="van Vugt R."/>
            <person name="Palmer N."/>
            <person name="Adams M.D."/>
            <person name="Gocayne J.D."/>
            <person name="Weidman J.F."/>
            <person name="Utterback T.R."/>
            <person name="Watthey L."/>
            <person name="McDonald L.A."/>
            <person name="Artiach P."/>
            <person name="Bowman C."/>
            <person name="Garland S.A."/>
            <person name="Fujii C."/>
            <person name="Cotton M.D."/>
            <person name="Horst K."/>
            <person name="Roberts K.M."/>
            <person name="Hatch B."/>
            <person name="Smith H.O."/>
            <person name="Venter J.C."/>
        </authorList>
    </citation>
    <scope>NUCLEOTIDE SEQUENCE [LARGE SCALE GENOMIC DNA]</scope>
    <source>
        <strain>ATCC 35210 / DSM 4680 / CIP 102532 / B31</strain>
    </source>
</reference>